<reference key="1">
    <citation type="journal article" date="1994" name="DNA Res.">
        <title>Prediction of the coding sequences of unidentified human genes. II. The coding sequences of 40 new genes (KIAA0041-KIAA0080) deduced by analysis of cDNA clones from human cell line KG-1.</title>
        <authorList>
            <person name="Nomura N."/>
            <person name="Nagase T."/>
            <person name="Miyajima N."/>
            <person name="Sazuka T."/>
            <person name="Tanaka A."/>
            <person name="Sato S."/>
            <person name="Seki N."/>
            <person name="Kawarabayasi Y."/>
            <person name="Ishikawa K."/>
            <person name="Tabata S."/>
        </authorList>
    </citation>
    <scope>NUCLEOTIDE SEQUENCE [LARGE SCALE MRNA]</scope>
    <source>
        <tissue>Bone marrow</tissue>
    </source>
</reference>
<reference key="2">
    <citation type="journal article" date="2004" name="Nat. Genet.">
        <title>Complete sequencing and characterization of 21,243 full-length human cDNAs.</title>
        <authorList>
            <person name="Ota T."/>
            <person name="Suzuki Y."/>
            <person name="Nishikawa T."/>
            <person name="Otsuki T."/>
            <person name="Sugiyama T."/>
            <person name="Irie R."/>
            <person name="Wakamatsu A."/>
            <person name="Hayashi K."/>
            <person name="Sato H."/>
            <person name="Nagai K."/>
            <person name="Kimura K."/>
            <person name="Makita H."/>
            <person name="Sekine M."/>
            <person name="Obayashi M."/>
            <person name="Nishi T."/>
            <person name="Shibahara T."/>
            <person name="Tanaka T."/>
            <person name="Ishii S."/>
            <person name="Yamamoto J."/>
            <person name="Saito K."/>
            <person name="Kawai Y."/>
            <person name="Isono Y."/>
            <person name="Nakamura Y."/>
            <person name="Nagahari K."/>
            <person name="Murakami K."/>
            <person name="Yasuda T."/>
            <person name="Iwayanagi T."/>
            <person name="Wagatsuma M."/>
            <person name="Shiratori A."/>
            <person name="Sudo H."/>
            <person name="Hosoiri T."/>
            <person name="Kaku Y."/>
            <person name="Kodaira H."/>
            <person name="Kondo H."/>
            <person name="Sugawara M."/>
            <person name="Takahashi M."/>
            <person name="Kanda K."/>
            <person name="Yokoi T."/>
            <person name="Furuya T."/>
            <person name="Kikkawa E."/>
            <person name="Omura Y."/>
            <person name="Abe K."/>
            <person name="Kamihara K."/>
            <person name="Katsuta N."/>
            <person name="Sato K."/>
            <person name="Tanikawa M."/>
            <person name="Yamazaki M."/>
            <person name="Ninomiya K."/>
            <person name="Ishibashi T."/>
            <person name="Yamashita H."/>
            <person name="Murakawa K."/>
            <person name="Fujimori K."/>
            <person name="Tanai H."/>
            <person name="Kimata M."/>
            <person name="Watanabe M."/>
            <person name="Hiraoka S."/>
            <person name="Chiba Y."/>
            <person name="Ishida S."/>
            <person name="Ono Y."/>
            <person name="Takiguchi S."/>
            <person name="Watanabe S."/>
            <person name="Yosida M."/>
            <person name="Hotuta T."/>
            <person name="Kusano J."/>
            <person name="Kanehori K."/>
            <person name="Takahashi-Fujii A."/>
            <person name="Hara H."/>
            <person name="Tanase T.-O."/>
            <person name="Nomura Y."/>
            <person name="Togiya S."/>
            <person name="Komai F."/>
            <person name="Hara R."/>
            <person name="Takeuchi K."/>
            <person name="Arita M."/>
            <person name="Imose N."/>
            <person name="Musashino K."/>
            <person name="Yuuki H."/>
            <person name="Oshima A."/>
            <person name="Sasaki N."/>
            <person name="Aotsuka S."/>
            <person name="Yoshikawa Y."/>
            <person name="Matsunawa H."/>
            <person name="Ichihara T."/>
            <person name="Shiohata N."/>
            <person name="Sano S."/>
            <person name="Moriya S."/>
            <person name="Momiyama H."/>
            <person name="Satoh N."/>
            <person name="Takami S."/>
            <person name="Terashima Y."/>
            <person name="Suzuki O."/>
            <person name="Nakagawa S."/>
            <person name="Senoh A."/>
            <person name="Mizoguchi H."/>
            <person name="Goto Y."/>
            <person name="Shimizu F."/>
            <person name="Wakebe H."/>
            <person name="Hishigaki H."/>
            <person name="Watanabe T."/>
            <person name="Sugiyama A."/>
            <person name="Takemoto M."/>
            <person name="Kawakami B."/>
            <person name="Yamazaki M."/>
            <person name="Watanabe K."/>
            <person name="Kumagai A."/>
            <person name="Itakura S."/>
            <person name="Fukuzumi Y."/>
            <person name="Fujimori Y."/>
            <person name="Komiyama M."/>
            <person name="Tashiro H."/>
            <person name="Tanigami A."/>
            <person name="Fujiwara T."/>
            <person name="Ono T."/>
            <person name="Yamada K."/>
            <person name="Fujii Y."/>
            <person name="Ozaki K."/>
            <person name="Hirao M."/>
            <person name="Ohmori Y."/>
            <person name="Kawabata A."/>
            <person name="Hikiji T."/>
            <person name="Kobatake N."/>
            <person name="Inagaki H."/>
            <person name="Ikema Y."/>
            <person name="Okamoto S."/>
            <person name="Okitani R."/>
            <person name="Kawakami T."/>
            <person name="Noguchi S."/>
            <person name="Itoh T."/>
            <person name="Shigeta K."/>
            <person name="Senba T."/>
            <person name="Matsumura K."/>
            <person name="Nakajima Y."/>
            <person name="Mizuno T."/>
            <person name="Morinaga M."/>
            <person name="Sasaki M."/>
            <person name="Togashi T."/>
            <person name="Oyama M."/>
            <person name="Hata H."/>
            <person name="Watanabe M."/>
            <person name="Komatsu T."/>
            <person name="Mizushima-Sugano J."/>
            <person name="Satoh T."/>
            <person name="Shirai Y."/>
            <person name="Takahashi Y."/>
            <person name="Nakagawa K."/>
            <person name="Okumura K."/>
            <person name="Nagase T."/>
            <person name="Nomura N."/>
            <person name="Kikuchi H."/>
            <person name="Masuho Y."/>
            <person name="Yamashita R."/>
            <person name="Nakai K."/>
            <person name="Yada T."/>
            <person name="Nakamura Y."/>
            <person name="Ohara O."/>
            <person name="Isogai T."/>
            <person name="Sugano S."/>
        </authorList>
    </citation>
    <scope>NUCLEOTIDE SEQUENCE [LARGE SCALE MRNA]</scope>
    <source>
        <tissue>Placenta</tissue>
    </source>
</reference>
<reference key="3">
    <citation type="journal article" date="2003" name="Nature">
        <title>The DNA sequence and analysis of human chromosome 6.</title>
        <authorList>
            <person name="Mungall A.J."/>
            <person name="Palmer S.A."/>
            <person name="Sims S.K."/>
            <person name="Edwards C.A."/>
            <person name="Ashurst J.L."/>
            <person name="Wilming L."/>
            <person name="Jones M.C."/>
            <person name="Horton R."/>
            <person name="Hunt S.E."/>
            <person name="Scott C.E."/>
            <person name="Gilbert J.G.R."/>
            <person name="Clamp M.E."/>
            <person name="Bethel G."/>
            <person name="Milne S."/>
            <person name="Ainscough R."/>
            <person name="Almeida J.P."/>
            <person name="Ambrose K.D."/>
            <person name="Andrews T.D."/>
            <person name="Ashwell R.I.S."/>
            <person name="Babbage A.K."/>
            <person name="Bagguley C.L."/>
            <person name="Bailey J."/>
            <person name="Banerjee R."/>
            <person name="Barker D.J."/>
            <person name="Barlow K.F."/>
            <person name="Bates K."/>
            <person name="Beare D.M."/>
            <person name="Beasley H."/>
            <person name="Beasley O."/>
            <person name="Bird C.P."/>
            <person name="Blakey S.E."/>
            <person name="Bray-Allen S."/>
            <person name="Brook J."/>
            <person name="Brown A.J."/>
            <person name="Brown J.Y."/>
            <person name="Burford D.C."/>
            <person name="Burrill W."/>
            <person name="Burton J."/>
            <person name="Carder C."/>
            <person name="Carter N.P."/>
            <person name="Chapman J.C."/>
            <person name="Clark S.Y."/>
            <person name="Clark G."/>
            <person name="Clee C.M."/>
            <person name="Clegg S."/>
            <person name="Cobley V."/>
            <person name="Collier R.E."/>
            <person name="Collins J.E."/>
            <person name="Colman L.K."/>
            <person name="Corby N.R."/>
            <person name="Coville G.J."/>
            <person name="Culley K.M."/>
            <person name="Dhami P."/>
            <person name="Davies J."/>
            <person name="Dunn M."/>
            <person name="Earthrowl M.E."/>
            <person name="Ellington A.E."/>
            <person name="Evans K.A."/>
            <person name="Faulkner L."/>
            <person name="Francis M.D."/>
            <person name="Frankish A."/>
            <person name="Frankland J."/>
            <person name="French L."/>
            <person name="Garner P."/>
            <person name="Garnett J."/>
            <person name="Ghori M.J."/>
            <person name="Gilby L.M."/>
            <person name="Gillson C.J."/>
            <person name="Glithero R.J."/>
            <person name="Grafham D.V."/>
            <person name="Grant M."/>
            <person name="Gribble S."/>
            <person name="Griffiths C."/>
            <person name="Griffiths M.N.D."/>
            <person name="Hall R."/>
            <person name="Halls K.S."/>
            <person name="Hammond S."/>
            <person name="Harley J.L."/>
            <person name="Hart E.A."/>
            <person name="Heath P.D."/>
            <person name="Heathcott R."/>
            <person name="Holmes S.J."/>
            <person name="Howden P.J."/>
            <person name="Howe K.L."/>
            <person name="Howell G.R."/>
            <person name="Huckle E."/>
            <person name="Humphray S.J."/>
            <person name="Humphries M.D."/>
            <person name="Hunt A.R."/>
            <person name="Johnson C.M."/>
            <person name="Joy A.A."/>
            <person name="Kay M."/>
            <person name="Keenan S.J."/>
            <person name="Kimberley A.M."/>
            <person name="King A."/>
            <person name="Laird G.K."/>
            <person name="Langford C."/>
            <person name="Lawlor S."/>
            <person name="Leongamornlert D.A."/>
            <person name="Leversha M."/>
            <person name="Lloyd C.R."/>
            <person name="Lloyd D.M."/>
            <person name="Loveland J.E."/>
            <person name="Lovell J."/>
            <person name="Martin S."/>
            <person name="Mashreghi-Mohammadi M."/>
            <person name="Maslen G.L."/>
            <person name="Matthews L."/>
            <person name="McCann O.T."/>
            <person name="McLaren S.J."/>
            <person name="McLay K."/>
            <person name="McMurray A."/>
            <person name="Moore M.J.F."/>
            <person name="Mullikin J.C."/>
            <person name="Niblett D."/>
            <person name="Nickerson T."/>
            <person name="Novik K.L."/>
            <person name="Oliver K."/>
            <person name="Overton-Larty E.K."/>
            <person name="Parker A."/>
            <person name="Patel R."/>
            <person name="Pearce A.V."/>
            <person name="Peck A.I."/>
            <person name="Phillimore B.J.C.T."/>
            <person name="Phillips S."/>
            <person name="Plumb R.W."/>
            <person name="Porter K.M."/>
            <person name="Ramsey Y."/>
            <person name="Ranby S.A."/>
            <person name="Rice C.M."/>
            <person name="Ross M.T."/>
            <person name="Searle S.M."/>
            <person name="Sehra H.K."/>
            <person name="Sheridan E."/>
            <person name="Skuce C.D."/>
            <person name="Smith S."/>
            <person name="Smith M."/>
            <person name="Spraggon L."/>
            <person name="Squares S.L."/>
            <person name="Steward C.A."/>
            <person name="Sycamore N."/>
            <person name="Tamlyn-Hall G."/>
            <person name="Tester J."/>
            <person name="Theaker A.J."/>
            <person name="Thomas D.W."/>
            <person name="Thorpe A."/>
            <person name="Tracey A."/>
            <person name="Tromans A."/>
            <person name="Tubby B."/>
            <person name="Wall M."/>
            <person name="Wallis J.M."/>
            <person name="West A.P."/>
            <person name="White S.S."/>
            <person name="Whitehead S.L."/>
            <person name="Whittaker H."/>
            <person name="Wild A."/>
            <person name="Willey D.J."/>
            <person name="Wilmer T.E."/>
            <person name="Wood J.M."/>
            <person name="Wray P.W."/>
            <person name="Wyatt J.C."/>
            <person name="Young L."/>
            <person name="Younger R.M."/>
            <person name="Bentley D.R."/>
            <person name="Coulson A."/>
            <person name="Durbin R.M."/>
            <person name="Hubbard T."/>
            <person name="Sulston J.E."/>
            <person name="Dunham I."/>
            <person name="Rogers J."/>
            <person name="Beck S."/>
        </authorList>
    </citation>
    <scope>NUCLEOTIDE SEQUENCE [LARGE SCALE GENOMIC DNA]</scope>
</reference>
<reference key="4">
    <citation type="submission" date="2005-07" db="EMBL/GenBank/DDBJ databases">
        <authorList>
            <person name="Mural R.J."/>
            <person name="Istrail S."/>
            <person name="Sutton G.G."/>
            <person name="Florea L."/>
            <person name="Halpern A.L."/>
            <person name="Mobarry C.M."/>
            <person name="Lippert R."/>
            <person name="Walenz B."/>
            <person name="Shatkay H."/>
            <person name="Dew I."/>
            <person name="Miller J.R."/>
            <person name="Flanigan M.J."/>
            <person name="Edwards N.J."/>
            <person name="Bolanos R."/>
            <person name="Fasulo D."/>
            <person name="Halldorsson B.V."/>
            <person name="Hannenhalli S."/>
            <person name="Turner R."/>
            <person name="Yooseph S."/>
            <person name="Lu F."/>
            <person name="Nusskern D.R."/>
            <person name="Shue B.C."/>
            <person name="Zheng X.H."/>
            <person name="Zhong F."/>
            <person name="Delcher A.L."/>
            <person name="Huson D.H."/>
            <person name="Kravitz S.A."/>
            <person name="Mouchard L."/>
            <person name="Reinert K."/>
            <person name="Remington K.A."/>
            <person name="Clark A.G."/>
            <person name="Waterman M.S."/>
            <person name="Eichler E.E."/>
            <person name="Adams M.D."/>
            <person name="Hunkapiller M.W."/>
            <person name="Myers E.W."/>
            <person name="Venter J.C."/>
        </authorList>
    </citation>
    <scope>NUCLEOTIDE SEQUENCE [LARGE SCALE GENOMIC DNA]</scope>
</reference>
<reference key="5">
    <citation type="journal article" date="2004" name="Genome Res.">
        <title>The status, quality, and expansion of the NIH full-length cDNA project: the Mammalian Gene Collection (MGC).</title>
        <authorList>
            <consortium name="The MGC Project Team"/>
        </authorList>
    </citation>
    <scope>NUCLEOTIDE SEQUENCE [LARGE SCALE MRNA]</scope>
    <source>
        <tissue>Brain</tissue>
    </source>
</reference>
<reference key="6">
    <citation type="journal article" date="2004" name="Mol. Cell. Biol.">
        <title>TRAM2 protein interacts with endoplasmic reticulum Ca2+ pump Serca2b and is necessary for collagen type I synthesis.</title>
        <authorList>
            <person name="Stefanovic B."/>
            <person name="Stefanovic L."/>
            <person name="Schnabl B."/>
            <person name="Bataller R."/>
            <person name="Brenner D.A."/>
        </authorList>
    </citation>
    <scope>FUNCTION</scope>
    <scope>INTERACTION WITH SERCA2B AND COL1A1</scope>
</reference>
<reference key="7">
    <citation type="journal article" date="2011" name="BMC Syst. Biol.">
        <title>Initial characterization of the human central proteome.</title>
        <authorList>
            <person name="Burkard T.R."/>
            <person name="Planyavsky M."/>
            <person name="Kaupe I."/>
            <person name="Breitwieser F.P."/>
            <person name="Buerckstuemmer T."/>
            <person name="Bennett K.L."/>
            <person name="Superti-Furga G."/>
            <person name="Colinge J."/>
        </authorList>
    </citation>
    <scope>IDENTIFICATION BY MASS SPECTROMETRY [LARGE SCALE ANALYSIS]</scope>
</reference>
<reference key="8">
    <citation type="journal article" date="2016" name="Mol. Cell">
        <title>Inverting the topology of a transmembrane protein by regulating the translocation of the first transmembrane helix.</title>
        <authorList>
            <person name="Chen Q."/>
            <person name="Denard B."/>
            <person name="Lee C.E."/>
            <person name="Han S."/>
            <person name="Ye J.S."/>
            <person name="Ye J."/>
        </authorList>
    </citation>
    <scope>FUNCTION</scope>
</reference>
<comment type="function">
    <text evidence="4 5">Necessary for collagen type I synthesis. May couple the activity of the ER Ca(2+) pump SERCA2B with the activity of the translocon. This coupling may increase the local Ca(2+) concentration at the site of collagen synthesis, and a high Ca(2+) concentration may be necessary for the function of molecular chaperones involved in collagen folding. Required for proper insertion of the first transmembrane helix N-terminus of TM4SF20 into the ER lumen, may act as a ceramide sensor for regulated alternative translocation (RAT) (PubMed:27499293).</text>
</comment>
<comment type="subunit">
    <text evidence="4">Interacts with SERCA2B and COL1A1.</text>
</comment>
<comment type="subcellular location">
    <subcellularLocation>
        <location evidence="6">Membrane</location>
        <topology evidence="1">Multi-pass membrane protein</topology>
    </subcellularLocation>
</comment>
<comment type="similarity">
    <text evidence="6">Belongs to the TRAM family.</text>
</comment>
<comment type="sequence caution" evidence="6">
    <conflict type="erroneous initiation">
        <sequence resource="EMBL-CDS" id="BAA06540"/>
    </conflict>
    <text>Extended N-terminus.</text>
</comment>
<sequence>MAFRRRTKSYPLFSQEFVIHNHADIGFCLVLCVLIGLMFEVTAKTAFLFILPQYNISVPTADSETVHYHYGPKDLVTILFYIFITIILHAVVQEYILDKISKRLHLSKVKHSKFNESGQLVVFHFTSVIWCFYVVVTEGYLTNPRSLWEDYPHVHLPFQVKFFYLCQLAYWLHALPELYFQKVRKEEIPRQLQYICLYLVHIAGAYLLNLSRLGLILLLLQYSTEFLFHTARLFYFADENNEKLFSAWAAVFGVTRLFILTLAVLAIGFGLARMENQAFDPEKGNFNTLFCRLCVLLLVCAAQAWLMWRFIHSQLRHWREYWNEQSAKRRVPATPRLPARLIKRESGYHENGVVKAENGTSPRTKKLKSP</sequence>
<feature type="chain" id="PRO_0000185532" description="Translocating chain-associated membrane protein 2">
    <location>
        <begin position="1"/>
        <end position="370"/>
    </location>
</feature>
<feature type="topological domain" description="Cytoplasmic" evidence="6">
    <location>
        <begin position="1"/>
        <end position="22"/>
    </location>
</feature>
<feature type="transmembrane region" description="Helical" evidence="1">
    <location>
        <begin position="23"/>
        <end position="43"/>
    </location>
</feature>
<feature type="topological domain" description="Extracellular" evidence="6">
    <location>
        <begin position="44"/>
        <end position="75"/>
    </location>
</feature>
<feature type="transmembrane region" description="Helical" evidence="1">
    <location>
        <begin position="76"/>
        <end position="96"/>
    </location>
</feature>
<feature type="topological domain" description="Cytoplasmic" evidence="6">
    <location>
        <begin position="97"/>
        <end position="119"/>
    </location>
</feature>
<feature type="transmembrane region" description="Helical" evidence="1">
    <location>
        <begin position="120"/>
        <end position="140"/>
    </location>
</feature>
<feature type="topological domain" description="Extracellular" evidence="6">
    <location>
        <begin position="141"/>
        <end position="159"/>
    </location>
</feature>
<feature type="transmembrane region" description="Helical" evidence="1">
    <location>
        <begin position="160"/>
        <end position="180"/>
    </location>
</feature>
<feature type="topological domain" description="Cytoplasmic" evidence="6">
    <location>
        <begin position="181"/>
        <end position="191"/>
    </location>
</feature>
<feature type="transmembrane region" description="Helical" evidence="1">
    <location>
        <begin position="192"/>
        <end position="209"/>
    </location>
</feature>
<feature type="topological domain" description="Extracellular" evidence="6">
    <location>
        <begin position="210"/>
        <end position="214"/>
    </location>
</feature>
<feature type="transmembrane region" description="Helical" evidence="1">
    <location>
        <begin position="215"/>
        <end position="235"/>
    </location>
</feature>
<feature type="topological domain" description="Cytoplasmic" evidence="6">
    <location>
        <begin position="236"/>
        <end position="250"/>
    </location>
</feature>
<feature type="transmembrane region" description="Helical" evidence="1">
    <location>
        <begin position="251"/>
        <end position="271"/>
    </location>
</feature>
<feature type="topological domain" description="Extracellular" evidence="6">
    <location>
        <begin position="272"/>
        <end position="287"/>
    </location>
</feature>
<feature type="transmembrane region" description="Helical" evidence="1">
    <location>
        <begin position="288"/>
        <end position="308"/>
    </location>
</feature>
<feature type="topological domain" description="Cytoplasmic" evidence="6">
    <location>
        <begin position="309"/>
        <end position="370"/>
    </location>
</feature>
<feature type="domain" description="TLC" evidence="2">
    <location>
        <begin position="112"/>
        <end position="321"/>
    </location>
</feature>
<feature type="region of interest" description="Disordered" evidence="3">
    <location>
        <begin position="348"/>
        <end position="370"/>
    </location>
</feature>
<feature type="glycosylation site" description="N-linked (GlcNAc...) asparagine" evidence="1">
    <location>
        <position position="55"/>
    </location>
</feature>
<organism>
    <name type="scientific">Homo sapiens</name>
    <name type="common">Human</name>
    <dbReference type="NCBI Taxonomy" id="9606"/>
    <lineage>
        <taxon>Eukaryota</taxon>
        <taxon>Metazoa</taxon>
        <taxon>Chordata</taxon>
        <taxon>Craniata</taxon>
        <taxon>Vertebrata</taxon>
        <taxon>Euteleostomi</taxon>
        <taxon>Mammalia</taxon>
        <taxon>Eutheria</taxon>
        <taxon>Euarchontoglires</taxon>
        <taxon>Primates</taxon>
        <taxon>Haplorrhini</taxon>
        <taxon>Catarrhini</taxon>
        <taxon>Hominidae</taxon>
        <taxon>Homo</taxon>
    </lineage>
</organism>
<gene>
    <name type="primary">TRAM2</name>
    <name type="synonym">KIAA0057</name>
</gene>
<accession>Q15035</accession>
<accession>A8K6T6</accession>
<proteinExistence type="evidence at protein level"/>
<name>TRAM2_HUMAN</name>
<evidence type="ECO:0000255" key="1"/>
<evidence type="ECO:0000255" key="2">
    <source>
        <dbReference type="PROSITE-ProRule" id="PRU00205"/>
    </source>
</evidence>
<evidence type="ECO:0000256" key="3">
    <source>
        <dbReference type="SAM" id="MobiDB-lite"/>
    </source>
</evidence>
<evidence type="ECO:0000269" key="4">
    <source>
    </source>
</evidence>
<evidence type="ECO:0000269" key="5">
    <source>
    </source>
</evidence>
<evidence type="ECO:0000305" key="6"/>
<keyword id="KW-0325">Glycoprotein</keyword>
<keyword id="KW-0472">Membrane</keyword>
<keyword id="KW-0653">Protein transport</keyword>
<keyword id="KW-1267">Proteomics identification</keyword>
<keyword id="KW-1185">Reference proteome</keyword>
<keyword id="KW-0811">Translocation</keyword>
<keyword id="KW-0812">Transmembrane</keyword>
<keyword id="KW-1133">Transmembrane helix</keyword>
<keyword id="KW-0813">Transport</keyword>
<protein>
    <recommendedName>
        <fullName>Translocating chain-associated membrane protein 2</fullName>
    </recommendedName>
</protein>
<dbReference type="EMBL" id="D31762">
    <property type="protein sequence ID" value="BAA06540.2"/>
    <property type="status" value="ALT_INIT"/>
    <property type="molecule type" value="mRNA"/>
</dbReference>
<dbReference type="EMBL" id="AK291751">
    <property type="protein sequence ID" value="BAF84440.1"/>
    <property type="molecule type" value="mRNA"/>
</dbReference>
<dbReference type="EMBL" id="AL049611">
    <property type="status" value="NOT_ANNOTATED_CDS"/>
    <property type="molecule type" value="Genomic_DNA"/>
</dbReference>
<dbReference type="EMBL" id="CH471081">
    <property type="protein sequence ID" value="EAX04373.1"/>
    <property type="molecule type" value="Genomic_DNA"/>
</dbReference>
<dbReference type="EMBL" id="BC028121">
    <property type="protein sequence ID" value="AAH28121.1"/>
    <property type="molecule type" value="mRNA"/>
</dbReference>
<dbReference type="CCDS" id="CCDS34477.1"/>
<dbReference type="RefSeq" id="NP_036420.1">
    <property type="nucleotide sequence ID" value="NM_012288.4"/>
</dbReference>
<dbReference type="SMR" id="Q15035"/>
<dbReference type="BioGRID" id="115049">
    <property type="interactions" value="10"/>
</dbReference>
<dbReference type="FunCoup" id="Q15035">
    <property type="interactions" value="249"/>
</dbReference>
<dbReference type="IntAct" id="Q15035">
    <property type="interactions" value="1"/>
</dbReference>
<dbReference type="STRING" id="9606.ENSP00000182527"/>
<dbReference type="TCDB" id="9.B.311.2.4">
    <property type="family name" value="the 6-7 tms tram-lag (tram-lag) family"/>
</dbReference>
<dbReference type="GlyCosmos" id="Q15035">
    <property type="glycosylation" value="1 site, No reported glycans"/>
</dbReference>
<dbReference type="GlyGen" id="Q15035">
    <property type="glycosylation" value="2 sites, 1 O-linked glycan (1 site)"/>
</dbReference>
<dbReference type="iPTMnet" id="Q15035"/>
<dbReference type="PhosphoSitePlus" id="Q15035"/>
<dbReference type="SwissPalm" id="Q15035"/>
<dbReference type="BioMuta" id="TRAM2"/>
<dbReference type="DMDM" id="18202502"/>
<dbReference type="jPOST" id="Q15035"/>
<dbReference type="MassIVE" id="Q15035"/>
<dbReference type="PaxDb" id="9606-ENSP00000182527"/>
<dbReference type="PeptideAtlas" id="Q15035"/>
<dbReference type="ProteomicsDB" id="60384"/>
<dbReference type="Pumba" id="Q15035"/>
<dbReference type="Antibodypedia" id="30914">
    <property type="antibodies" value="165 antibodies from 26 providers"/>
</dbReference>
<dbReference type="DNASU" id="9697"/>
<dbReference type="Ensembl" id="ENST00000182527.4">
    <property type="protein sequence ID" value="ENSP00000182527.3"/>
    <property type="gene ID" value="ENSG00000065308.5"/>
</dbReference>
<dbReference type="GeneID" id="9697"/>
<dbReference type="KEGG" id="hsa:9697"/>
<dbReference type="MANE-Select" id="ENST00000182527.4">
    <property type="protein sequence ID" value="ENSP00000182527.3"/>
    <property type="RefSeq nucleotide sequence ID" value="NM_012288.4"/>
    <property type="RefSeq protein sequence ID" value="NP_036420.1"/>
</dbReference>
<dbReference type="UCSC" id="uc003paq.4">
    <property type="organism name" value="human"/>
</dbReference>
<dbReference type="AGR" id="HGNC:16855"/>
<dbReference type="CTD" id="9697"/>
<dbReference type="DisGeNET" id="9697"/>
<dbReference type="GeneCards" id="TRAM2"/>
<dbReference type="HGNC" id="HGNC:16855">
    <property type="gene designation" value="TRAM2"/>
</dbReference>
<dbReference type="HPA" id="ENSG00000065308">
    <property type="expression patterns" value="Low tissue specificity"/>
</dbReference>
<dbReference type="MIM" id="608485">
    <property type="type" value="gene"/>
</dbReference>
<dbReference type="neXtProt" id="NX_Q15035"/>
<dbReference type="OpenTargets" id="ENSG00000065308"/>
<dbReference type="PharmGKB" id="PA128394555"/>
<dbReference type="VEuPathDB" id="HostDB:ENSG00000065308"/>
<dbReference type="eggNOG" id="KOG1608">
    <property type="taxonomic scope" value="Eukaryota"/>
</dbReference>
<dbReference type="GeneTree" id="ENSGT00510000046470"/>
<dbReference type="HOGENOM" id="CLU_062830_0_0_1"/>
<dbReference type="InParanoid" id="Q15035"/>
<dbReference type="OMA" id="LCRLCML"/>
<dbReference type="OrthoDB" id="3053196at2759"/>
<dbReference type="PAN-GO" id="Q15035">
    <property type="GO annotations" value="2 GO annotations based on evolutionary models"/>
</dbReference>
<dbReference type="PhylomeDB" id="Q15035"/>
<dbReference type="TreeFam" id="TF314319"/>
<dbReference type="PathwayCommons" id="Q15035"/>
<dbReference type="SignaLink" id="Q15035"/>
<dbReference type="BioGRID-ORCS" id="9697">
    <property type="hits" value="29 hits in 1150 CRISPR screens"/>
</dbReference>
<dbReference type="ChiTaRS" id="TRAM2">
    <property type="organism name" value="human"/>
</dbReference>
<dbReference type="GeneWiki" id="TRAM2"/>
<dbReference type="GenomeRNAi" id="9697"/>
<dbReference type="Pharos" id="Q15035">
    <property type="development level" value="Tbio"/>
</dbReference>
<dbReference type="PRO" id="PR:Q15035"/>
<dbReference type="Proteomes" id="UP000005640">
    <property type="component" value="Chromosome 6"/>
</dbReference>
<dbReference type="RNAct" id="Q15035">
    <property type="molecule type" value="protein"/>
</dbReference>
<dbReference type="Bgee" id="ENSG00000065308">
    <property type="expression patterns" value="Expressed in oocyte and 171 other cell types or tissues"/>
</dbReference>
<dbReference type="ExpressionAtlas" id="Q15035">
    <property type="expression patterns" value="baseline and differential"/>
</dbReference>
<dbReference type="GO" id="GO:0005789">
    <property type="term" value="C:endoplasmic reticulum membrane"/>
    <property type="evidence" value="ECO:0000318"/>
    <property type="project" value="GO_Central"/>
</dbReference>
<dbReference type="GO" id="GO:0032964">
    <property type="term" value="P:collagen biosynthetic process"/>
    <property type="evidence" value="ECO:0000315"/>
    <property type="project" value="UniProtKB"/>
</dbReference>
<dbReference type="GO" id="GO:0045048">
    <property type="term" value="P:protein insertion into ER membrane"/>
    <property type="evidence" value="ECO:0000314"/>
    <property type="project" value="UniProtKB"/>
</dbReference>
<dbReference type="GO" id="GO:0006616">
    <property type="term" value="P:SRP-dependent cotranslational protein targeting to membrane, translocation"/>
    <property type="evidence" value="ECO:0007669"/>
    <property type="project" value="InterPro"/>
</dbReference>
<dbReference type="InterPro" id="IPR006634">
    <property type="entry name" value="TLC-dom"/>
</dbReference>
<dbReference type="InterPro" id="IPR016447">
    <property type="entry name" value="Translocation_assoc_membrane"/>
</dbReference>
<dbReference type="PANTHER" id="PTHR12371:SF4">
    <property type="entry name" value="TRANSLOCATING CHAIN-ASSOCIATED MEMBRANE PROTEIN 2"/>
    <property type="match status" value="1"/>
</dbReference>
<dbReference type="PANTHER" id="PTHR12371">
    <property type="entry name" value="TRANSLOCATION ASSOCIATED MEMBRANE PROTEIN"/>
    <property type="match status" value="1"/>
</dbReference>
<dbReference type="Pfam" id="PF03798">
    <property type="entry name" value="TRAM_LAG1_CLN8"/>
    <property type="match status" value="1"/>
</dbReference>
<dbReference type="PIRSF" id="PIRSF005449">
    <property type="entry name" value="Translocation_assoc_membrane"/>
    <property type="match status" value="1"/>
</dbReference>
<dbReference type="SMART" id="SM00724">
    <property type="entry name" value="TLC"/>
    <property type="match status" value="1"/>
</dbReference>
<dbReference type="PROSITE" id="PS50922">
    <property type="entry name" value="TLC"/>
    <property type="match status" value="1"/>
</dbReference>